<accession>Q9ZBR9</accession>
<name>DDL_STRCO</name>
<proteinExistence type="inferred from homology"/>
<feature type="chain" id="PRO_0000177885" description="D-alanine--D-alanine ligase">
    <location>
        <begin position="1"/>
        <end position="389"/>
    </location>
</feature>
<feature type="domain" description="ATP-grasp">
    <location>
        <begin position="169"/>
        <end position="379"/>
    </location>
</feature>
<feature type="region of interest" description="Disordered" evidence="2">
    <location>
        <begin position="1"/>
        <end position="22"/>
    </location>
</feature>
<feature type="compositionally biased region" description="Polar residues" evidence="2">
    <location>
        <begin position="1"/>
        <end position="12"/>
    </location>
</feature>
<feature type="binding site" evidence="1">
    <location>
        <begin position="205"/>
        <end position="260"/>
    </location>
    <ligand>
        <name>ATP</name>
        <dbReference type="ChEBI" id="CHEBI:30616"/>
    </ligand>
</feature>
<feature type="binding site" evidence="1">
    <location>
        <position position="333"/>
    </location>
    <ligand>
        <name>Mg(2+)</name>
        <dbReference type="ChEBI" id="CHEBI:18420"/>
        <label>1</label>
    </ligand>
</feature>
<feature type="binding site" evidence="1">
    <location>
        <position position="346"/>
    </location>
    <ligand>
        <name>Mg(2+)</name>
        <dbReference type="ChEBI" id="CHEBI:18420"/>
        <label>1</label>
    </ligand>
</feature>
<feature type="binding site" evidence="1">
    <location>
        <position position="346"/>
    </location>
    <ligand>
        <name>Mg(2+)</name>
        <dbReference type="ChEBI" id="CHEBI:18420"/>
        <label>2</label>
    </ligand>
</feature>
<feature type="binding site" evidence="1">
    <location>
        <position position="348"/>
    </location>
    <ligand>
        <name>Mg(2+)</name>
        <dbReference type="ChEBI" id="CHEBI:18420"/>
        <label>2</label>
    </ligand>
</feature>
<dbReference type="EC" id="6.3.2.4"/>
<dbReference type="EMBL" id="AL939124">
    <property type="protein sequence ID" value="CAA22403.1"/>
    <property type="molecule type" value="Genomic_DNA"/>
</dbReference>
<dbReference type="PIR" id="T35644">
    <property type="entry name" value="T35644"/>
</dbReference>
<dbReference type="RefSeq" id="NP_629695.1">
    <property type="nucleotide sequence ID" value="NC_003888.3"/>
</dbReference>
<dbReference type="RefSeq" id="WP_003973434.1">
    <property type="nucleotide sequence ID" value="NZ_VNID01000011.1"/>
</dbReference>
<dbReference type="SMR" id="Q9ZBR9"/>
<dbReference type="FunCoup" id="Q9ZBR9">
    <property type="interactions" value="41"/>
</dbReference>
<dbReference type="STRING" id="100226.gene:17763218"/>
<dbReference type="PaxDb" id="100226-SCO5560"/>
<dbReference type="KEGG" id="sco:SCO5560"/>
<dbReference type="PATRIC" id="fig|100226.15.peg.5649"/>
<dbReference type="eggNOG" id="COG1181">
    <property type="taxonomic scope" value="Bacteria"/>
</dbReference>
<dbReference type="HOGENOM" id="CLU_039268_0_0_11"/>
<dbReference type="InParanoid" id="Q9ZBR9"/>
<dbReference type="OrthoDB" id="9813261at2"/>
<dbReference type="PhylomeDB" id="Q9ZBR9"/>
<dbReference type="UniPathway" id="UPA00219"/>
<dbReference type="Proteomes" id="UP000001973">
    <property type="component" value="Chromosome"/>
</dbReference>
<dbReference type="GO" id="GO:0005829">
    <property type="term" value="C:cytosol"/>
    <property type="evidence" value="ECO:0000318"/>
    <property type="project" value="GO_Central"/>
</dbReference>
<dbReference type="GO" id="GO:0005524">
    <property type="term" value="F:ATP binding"/>
    <property type="evidence" value="ECO:0007669"/>
    <property type="project" value="UniProtKB-KW"/>
</dbReference>
<dbReference type="GO" id="GO:0008716">
    <property type="term" value="F:D-alanine-D-alanine ligase activity"/>
    <property type="evidence" value="ECO:0000318"/>
    <property type="project" value="GO_Central"/>
</dbReference>
<dbReference type="GO" id="GO:0046872">
    <property type="term" value="F:metal ion binding"/>
    <property type="evidence" value="ECO:0007669"/>
    <property type="project" value="UniProtKB-KW"/>
</dbReference>
<dbReference type="GO" id="GO:0071555">
    <property type="term" value="P:cell wall organization"/>
    <property type="evidence" value="ECO:0007669"/>
    <property type="project" value="UniProtKB-KW"/>
</dbReference>
<dbReference type="GO" id="GO:0009252">
    <property type="term" value="P:peptidoglycan biosynthetic process"/>
    <property type="evidence" value="ECO:0000318"/>
    <property type="project" value="GO_Central"/>
</dbReference>
<dbReference type="GO" id="GO:0008360">
    <property type="term" value="P:regulation of cell shape"/>
    <property type="evidence" value="ECO:0007669"/>
    <property type="project" value="UniProtKB-KW"/>
</dbReference>
<dbReference type="FunFam" id="3.30.470.20:FF:000008">
    <property type="entry name" value="D-alanine--D-alanine ligase"/>
    <property type="match status" value="1"/>
</dbReference>
<dbReference type="FunFam" id="3.40.50.20:FF:000026">
    <property type="entry name" value="D-alanine--D-alanine ligase"/>
    <property type="match status" value="1"/>
</dbReference>
<dbReference type="Gene3D" id="3.40.50.20">
    <property type="match status" value="1"/>
</dbReference>
<dbReference type="Gene3D" id="3.30.1490.20">
    <property type="entry name" value="ATP-grasp fold, A domain"/>
    <property type="match status" value="1"/>
</dbReference>
<dbReference type="Gene3D" id="3.30.470.20">
    <property type="entry name" value="ATP-grasp fold, B domain"/>
    <property type="match status" value="1"/>
</dbReference>
<dbReference type="HAMAP" id="MF_00047">
    <property type="entry name" value="Dala_Dala_lig"/>
    <property type="match status" value="1"/>
</dbReference>
<dbReference type="InterPro" id="IPR011761">
    <property type="entry name" value="ATP-grasp"/>
</dbReference>
<dbReference type="InterPro" id="IPR013815">
    <property type="entry name" value="ATP_grasp_subdomain_1"/>
</dbReference>
<dbReference type="InterPro" id="IPR000291">
    <property type="entry name" value="D-Ala_lig_Van_CS"/>
</dbReference>
<dbReference type="InterPro" id="IPR005905">
    <property type="entry name" value="D_ala_D_ala"/>
</dbReference>
<dbReference type="InterPro" id="IPR011095">
    <property type="entry name" value="Dala_Dala_lig_C"/>
</dbReference>
<dbReference type="InterPro" id="IPR011127">
    <property type="entry name" value="Dala_Dala_lig_N"/>
</dbReference>
<dbReference type="InterPro" id="IPR016185">
    <property type="entry name" value="PreATP-grasp_dom_sf"/>
</dbReference>
<dbReference type="NCBIfam" id="TIGR01205">
    <property type="entry name" value="D_ala_D_alaTIGR"/>
    <property type="match status" value="1"/>
</dbReference>
<dbReference type="NCBIfam" id="NF002528">
    <property type="entry name" value="PRK01966.1-4"/>
    <property type="match status" value="1"/>
</dbReference>
<dbReference type="PANTHER" id="PTHR23132">
    <property type="entry name" value="D-ALANINE--D-ALANINE LIGASE"/>
    <property type="match status" value="1"/>
</dbReference>
<dbReference type="PANTHER" id="PTHR23132:SF25">
    <property type="entry name" value="D-ALANINE--D-ALANINE LIGASE A"/>
    <property type="match status" value="1"/>
</dbReference>
<dbReference type="Pfam" id="PF07478">
    <property type="entry name" value="Dala_Dala_lig_C"/>
    <property type="match status" value="1"/>
</dbReference>
<dbReference type="Pfam" id="PF01820">
    <property type="entry name" value="Dala_Dala_lig_N"/>
    <property type="match status" value="1"/>
</dbReference>
<dbReference type="PIRSF" id="PIRSF039102">
    <property type="entry name" value="Ddl/VanB"/>
    <property type="match status" value="1"/>
</dbReference>
<dbReference type="SUPFAM" id="SSF56059">
    <property type="entry name" value="Glutathione synthetase ATP-binding domain-like"/>
    <property type="match status" value="1"/>
</dbReference>
<dbReference type="SUPFAM" id="SSF52440">
    <property type="entry name" value="PreATP-grasp domain"/>
    <property type="match status" value="1"/>
</dbReference>
<dbReference type="PROSITE" id="PS50975">
    <property type="entry name" value="ATP_GRASP"/>
    <property type="match status" value="1"/>
</dbReference>
<dbReference type="PROSITE" id="PS00843">
    <property type="entry name" value="DALA_DALA_LIGASE_1"/>
    <property type="match status" value="1"/>
</dbReference>
<dbReference type="PROSITE" id="PS00844">
    <property type="entry name" value="DALA_DALA_LIGASE_2"/>
    <property type="match status" value="1"/>
</dbReference>
<organism>
    <name type="scientific">Streptomyces coelicolor (strain ATCC BAA-471 / A3(2) / M145)</name>
    <dbReference type="NCBI Taxonomy" id="100226"/>
    <lineage>
        <taxon>Bacteria</taxon>
        <taxon>Bacillati</taxon>
        <taxon>Actinomycetota</taxon>
        <taxon>Actinomycetes</taxon>
        <taxon>Kitasatosporales</taxon>
        <taxon>Streptomycetaceae</taxon>
        <taxon>Streptomyces</taxon>
        <taxon>Streptomyces albidoflavus group</taxon>
    </lineage>
</organism>
<sequence>MSTENLPQNPEQSPRRPPRKPRVAVVFGGRSSEHGISVVTAGAVLAAIDRTRYDVLPIGITRDGRWALTADEPERMAITERRTPDVEELAESTEGGVLLPVDPANREVVYSEPGSVPKALGEVDVVFPVLHGPYGEDGTLQGLLELSGVPYVGAGVLASAVGQDKEYMKAVFTSYGLKVGPYAVIRPREWEQDRSGARKKIVDFAGEHGWPLFVKPARAGSSIGITKVDDLAGLDEAIEEARRHDPKILVEAALRGREIECGVLEFEDGPRASVPAEIPPPSEHAYYDFEAKYIDSTPGIVPAPLTAEETAEVQRLAVAAFDAASCEGLVRADFFLTEDDEFVINEINTMPGFTPISMYPQMWQASGVSYPELVDRLVQAALRRPTGLR</sequence>
<keyword id="KW-0067">ATP-binding</keyword>
<keyword id="KW-0133">Cell shape</keyword>
<keyword id="KW-0961">Cell wall biogenesis/degradation</keyword>
<keyword id="KW-0963">Cytoplasm</keyword>
<keyword id="KW-0436">Ligase</keyword>
<keyword id="KW-0460">Magnesium</keyword>
<keyword id="KW-0464">Manganese</keyword>
<keyword id="KW-0479">Metal-binding</keyword>
<keyword id="KW-0547">Nucleotide-binding</keyword>
<keyword id="KW-0573">Peptidoglycan synthesis</keyword>
<keyword id="KW-1185">Reference proteome</keyword>
<comment type="function">
    <text evidence="1">Cell wall formation.</text>
</comment>
<comment type="catalytic activity">
    <reaction>
        <text>2 D-alanine + ATP = D-alanyl-D-alanine + ADP + phosphate + H(+)</text>
        <dbReference type="Rhea" id="RHEA:11224"/>
        <dbReference type="ChEBI" id="CHEBI:15378"/>
        <dbReference type="ChEBI" id="CHEBI:30616"/>
        <dbReference type="ChEBI" id="CHEBI:43474"/>
        <dbReference type="ChEBI" id="CHEBI:57416"/>
        <dbReference type="ChEBI" id="CHEBI:57822"/>
        <dbReference type="ChEBI" id="CHEBI:456216"/>
        <dbReference type="EC" id="6.3.2.4"/>
    </reaction>
</comment>
<comment type="cofactor">
    <cofactor evidence="1">
        <name>Mg(2+)</name>
        <dbReference type="ChEBI" id="CHEBI:18420"/>
    </cofactor>
    <cofactor evidence="1">
        <name>Mn(2+)</name>
        <dbReference type="ChEBI" id="CHEBI:29035"/>
    </cofactor>
    <text evidence="1">Binds 2 magnesium or manganese ions per subunit.</text>
</comment>
<comment type="pathway">
    <text>Cell wall biogenesis; peptidoglycan biosynthesis.</text>
</comment>
<comment type="subcellular location">
    <subcellularLocation>
        <location evidence="1">Cytoplasm</location>
    </subcellularLocation>
</comment>
<comment type="similarity">
    <text evidence="3">Belongs to the D-alanine--D-alanine ligase family.</text>
</comment>
<gene>
    <name type="primary">ddl</name>
    <name type="synonym">ddlA</name>
    <name type="ordered locus">SCO5560</name>
    <name type="ORF">SC7A1.04</name>
</gene>
<protein>
    <recommendedName>
        <fullName>D-alanine--D-alanine ligase</fullName>
        <ecNumber>6.3.2.4</ecNumber>
    </recommendedName>
    <alternativeName>
        <fullName>D-Ala-D-Ala ligase</fullName>
    </alternativeName>
    <alternativeName>
        <fullName>D-alanylalanine synthetase</fullName>
    </alternativeName>
</protein>
<reference key="1">
    <citation type="journal article" date="2002" name="Nature">
        <title>Complete genome sequence of the model actinomycete Streptomyces coelicolor A3(2).</title>
        <authorList>
            <person name="Bentley S.D."/>
            <person name="Chater K.F."/>
            <person name="Cerdeno-Tarraga A.-M."/>
            <person name="Challis G.L."/>
            <person name="Thomson N.R."/>
            <person name="James K.D."/>
            <person name="Harris D.E."/>
            <person name="Quail M.A."/>
            <person name="Kieser H."/>
            <person name="Harper D."/>
            <person name="Bateman A."/>
            <person name="Brown S."/>
            <person name="Chandra G."/>
            <person name="Chen C.W."/>
            <person name="Collins M."/>
            <person name="Cronin A."/>
            <person name="Fraser A."/>
            <person name="Goble A."/>
            <person name="Hidalgo J."/>
            <person name="Hornsby T."/>
            <person name="Howarth S."/>
            <person name="Huang C.-H."/>
            <person name="Kieser T."/>
            <person name="Larke L."/>
            <person name="Murphy L.D."/>
            <person name="Oliver K."/>
            <person name="O'Neil S."/>
            <person name="Rabbinowitsch E."/>
            <person name="Rajandream M.A."/>
            <person name="Rutherford K.M."/>
            <person name="Rutter S."/>
            <person name="Seeger K."/>
            <person name="Saunders D."/>
            <person name="Sharp S."/>
            <person name="Squares R."/>
            <person name="Squares S."/>
            <person name="Taylor K."/>
            <person name="Warren T."/>
            <person name="Wietzorrek A."/>
            <person name="Woodward J.R."/>
            <person name="Barrell B.G."/>
            <person name="Parkhill J."/>
            <person name="Hopwood D.A."/>
        </authorList>
    </citation>
    <scope>NUCLEOTIDE SEQUENCE [LARGE SCALE GENOMIC DNA]</scope>
    <source>
        <strain>ATCC BAA-471 / A3(2) / M145</strain>
    </source>
</reference>
<evidence type="ECO:0000250" key="1"/>
<evidence type="ECO:0000256" key="2">
    <source>
        <dbReference type="SAM" id="MobiDB-lite"/>
    </source>
</evidence>
<evidence type="ECO:0000305" key="3"/>